<proteinExistence type="inferred from homology"/>
<protein>
    <recommendedName>
        <fullName>Nitrogen regulatory protein P-II</fullName>
    </recommendedName>
</protein>
<reference key="1">
    <citation type="journal article" date="2003" name="Proc. Natl. Acad. Sci. U.S.A.">
        <title>The complete genome sequence of Mycobacterium bovis.</title>
        <authorList>
            <person name="Garnier T."/>
            <person name="Eiglmeier K."/>
            <person name="Camus J.-C."/>
            <person name="Medina N."/>
            <person name="Mansoor H."/>
            <person name="Pryor M."/>
            <person name="Duthoy S."/>
            <person name="Grondin S."/>
            <person name="Lacroix C."/>
            <person name="Monsempe C."/>
            <person name="Simon S."/>
            <person name="Harris B."/>
            <person name="Atkin R."/>
            <person name="Doggett J."/>
            <person name="Mayes R."/>
            <person name="Keating L."/>
            <person name="Wheeler P.R."/>
            <person name="Parkhill J."/>
            <person name="Barrell B.G."/>
            <person name="Cole S.T."/>
            <person name="Gordon S.V."/>
            <person name="Hewinson R.G."/>
        </authorList>
    </citation>
    <scope>NUCLEOTIDE SEQUENCE [LARGE SCALE GENOMIC DNA]</scope>
    <source>
        <strain>ATCC BAA-935 / AF2122/97</strain>
    </source>
</reference>
<reference key="2">
    <citation type="journal article" date="2017" name="Genome Announc.">
        <title>Updated reference genome sequence and annotation of Mycobacterium bovis AF2122/97.</title>
        <authorList>
            <person name="Malone K.M."/>
            <person name="Farrell D."/>
            <person name="Stuber T.P."/>
            <person name="Schubert O.T."/>
            <person name="Aebersold R."/>
            <person name="Robbe-Austerman S."/>
            <person name="Gordon S.V."/>
        </authorList>
    </citation>
    <scope>NUCLEOTIDE SEQUENCE [LARGE SCALE GENOMIC DNA]</scope>
    <scope>GENOME REANNOTATION</scope>
    <source>
        <strain>ATCC BAA-935 / AF2122/97</strain>
    </source>
</reference>
<feature type="chain" id="PRO_0000139780" description="Nitrogen regulatory protein P-II">
    <location>
        <begin position="1"/>
        <end position="112"/>
    </location>
</feature>
<feature type="modified residue" description="O-UMP-tyrosine" evidence="2">
    <location>
        <position position="51"/>
    </location>
</feature>
<comment type="function">
    <text evidence="1">In nitrogen-limiting conditions, when the ratio of Gln to 2-ketoglutarate decreases, P-II is uridylylated to P-II-UMP. P-II-UMP allows the deadenylation of glutamine synthetase (GS), thus activating the enzyme. Conversely, in nitrogen excess P-II is deuridylated and promotes the adenylation of GS. P-II indirectly controls the transcription of the GS gene (glnA). P-II prevents NR-II-catalyzed conversion of NR-I to NR-I-phosphate, the transcriptional activator of glnA. When P-II is uridylylated to P-II-UMP, these events are reversed (By similarity).</text>
</comment>
<comment type="subunit">
    <text evidence="1">Homotrimer.</text>
</comment>
<comment type="similarity">
    <text evidence="2">Belongs to the P(II) protein family.</text>
</comment>
<accession>P64250</accession>
<accession>A0A1R3Y2L5</accession>
<accession>Q10960</accession>
<accession>X2BMG6</accession>
<name>GLNB_MYCBO</name>
<dbReference type="EMBL" id="LT708304">
    <property type="protein sequence ID" value="SIU01564.1"/>
    <property type="molecule type" value="Genomic_DNA"/>
</dbReference>
<dbReference type="RefSeq" id="NP_856588.1">
    <property type="nucleotide sequence ID" value="NC_002945.3"/>
</dbReference>
<dbReference type="RefSeq" id="WP_003414756.1">
    <property type="nucleotide sequence ID" value="NC_002945.4"/>
</dbReference>
<dbReference type="SMR" id="P64250"/>
<dbReference type="GeneID" id="45426906"/>
<dbReference type="KEGG" id="mbo:BQ2027_MB2943C"/>
<dbReference type="PATRIC" id="fig|233413.5.peg.3229"/>
<dbReference type="Proteomes" id="UP000001419">
    <property type="component" value="Chromosome"/>
</dbReference>
<dbReference type="GO" id="GO:0005829">
    <property type="term" value="C:cytosol"/>
    <property type="evidence" value="ECO:0007669"/>
    <property type="project" value="TreeGrafter"/>
</dbReference>
<dbReference type="GO" id="GO:0005524">
    <property type="term" value="F:ATP binding"/>
    <property type="evidence" value="ECO:0007669"/>
    <property type="project" value="TreeGrafter"/>
</dbReference>
<dbReference type="GO" id="GO:0030234">
    <property type="term" value="F:enzyme regulator activity"/>
    <property type="evidence" value="ECO:0007669"/>
    <property type="project" value="InterPro"/>
</dbReference>
<dbReference type="GO" id="GO:0006808">
    <property type="term" value="P:regulation of nitrogen utilization"/>
    <property type="evidence" value="ECO:0007669"/>
    <property type="project" value="InterPro"/>
</dbReference>
<dbReference type="FunFam" id="3.30.70.120:FF:000001">
    <property type="entry name" value="Nitrogen regulatory protein P-II"/>
    <property type="match status" value="1"/>
</dbReference>
<dbReference type="Gene3D" id="3.30.70.120">
    <property type="match status" value="1"/>
</dbReference>
<dbReference type="InterPro" id="IPR002187">
    <property type="entry name" value="N-reg_PII"/>
</dbReference>
<dbReference type="InterPro" id="IPR011322">
    <property type="entry name" value="N-reg_PII-like_a/b"/>
</dbReference>
<dbReference type="InterPro" id="IPR015867">
    <property type="entry name" value="N-reg_PII/ATP_PRibTrfase_C"/>
</dbReference>
<dbReference type="InterPro" id="IPR017918">
    <property type="entry name" value="N-reg_PII_CS"/>
</dbReference>
<dbReference type="InterPro" id="IPR002332">
    <property type="entry name" value="N-reg_PII_urydylation_site"/>
</dbReference>
<dbReference type="PANTHER" id="PTHR30115">
    <property type="entry name" value="NITROGEN REGULATORY PROTEIN P-II"/>
    <property type="match status" value="1"/>
</dbReference>
<dbReference type="PANTHER" id="PTHR30115:SF11">
    <property type="entry name" value="NITROGEN REGULATORY PROTEIN P-II HOMOLOG"/>
    <property type="match status" value="1"/>
</dbReference>
<dbReference type="Pfam" id="PF00543">
    <property type="entry name" value="P-II"/>
    <property type="match status" value="1"/>
</dbReference>
<dbReference type="PIRSF" id="PIRSF039144">
    <property type="entry name" value="GlnB"/>
    <property type="match status" value="1"/>
</dbReference>
<dbReference type="PRINTS" id="PR00340">
    <property type="entry name" value="PIIGLNB"/>
</dbReference>
<dbReference type="SMART" id="SM00938">
    <property type="entry name" value="P-II"/>
    <property type="match status" value="1"/>
</dbReference>
<dbReference type="SUPFAM" id="SSF54913">
    <property type="entry name" value="GlnB-like"/>
    <property type="match status" value="1"/>
</dbReference>
<dbReference type="PROSITE" id="PS00638">
    <property type="entry name" value="PII_GLNB_CTER"/>
    <property type="match status" value="1"/>
</dbReference>
<dbReference type="PROSITE" id="PS51343">
    <property type="entry name" value="PII_GLNB_DOM"/>
    <property type="match status" value="1"/>
</dbReference>
<dbReference type="PROSITE" id="PS00496">
    <property type="entry name" value="PII_GLNB_UMP"/>
    <property type="match status" value="1"/>
</dbReference>
<sequence length="112" mass="12227">MKLITAIVKPFTLDDVKTSLEDAGVLGMTVSEIQGYGRQKGHTEVYRGAEYSVDFVPKVRIEVVVDDSIVDKVVDSIVRAARTGKIGDGKVWVSPVDTIVRVRTGERGHDAL</sequence>
<organism>
    <name type="scientific">Mycobacterium bovis (strain ATCC BAA-935 / AF2122/97)</name>
    <dbReference type="NCBI Taxonomy" id="233413"/>
    <lineage>
        <taxon>Bacteria</taxon>
        <taxon>Bacillati</taxon>
        <taxon>Actinomycetota</taxon>
        <taxon>Actinomycetes</taxon>
        <taxon>Mycobacteriales</taxon>
        <taxon>Mycobacteriaceae</taxon>
        <taxon>Mycobacterium</taxon>
        <taxon>Mycobacterium tuberculosis complex</taxon>
    </lineage>
</organism>
<keyword id="KW-0547">Nucleotide-binding</keyword>
<keyword id="KW-0597">Phosphoprotein</keyword>
<keyword id="KW-1185">Reference proteome</keyword>
<keyword id="KW-0804">Transcription</keyword>
<keyword id="KW-0805">Transcription regulation</keyword>
<evidence type="ECO:0000250" key="1"/>
<evidence type="ECO:0000255" key="2">
    <source>
        <dbReference type="PROSITE-ProRule" id="PRU00675"/>
    </source>
</evidence>
<gene>
    <name type="primary">glnB</name>
    <name type="ordered locus">BQ2027_MB2943C</name>
</gene>